<proteinExistence type="inferred from homology"/>
<protein>
    <recommendedName>
        <fullName evidence="1">Homoserine O-succinyltransferase</fullName>
        <shortName evidence="1">HST</shortName>
        <ecNumber evidence="1">2.3.1.46</ecNumber>
    </recommendedName>
    <alternativeName>
        <fullName evidence="1">Homoserine transsuccinylase</fullName>
        <shortName evidence="1">HTS</shortName>
    </alternativeName>
</protein>
<dbReference type="EC" id="2.3.1.46" evidence="1"/>
<dbReference type="EMBL" id="CP001052">
    <property type="protein sequence ID" value="ACD14760.1"/>
    <property type="molecule type" value="Genomic_DNA"/>
</dbReference>
<dbReference type="RefSeq" id="WP_012431404.1">
    <property type="nucleotide sequence ID" value="NC_010681.1"/>
</dbReference>
<dbReference type="SMR" id="B2T1N1"/>
<dbReference type="STRING" id="398527.Bphyt_0335"/>
<dbReference type="ESTHER" id="burxl-metx">
    <property type="family name" value="Homoserine_transacetylase"/>
</dbReference>
<dbReference type="KEGG" id="bpy:Bphyt_0335"/>
<dbReference type="eggNOG" id="COG2021">
    <property type="taxonomic scope" value="Bacteria"/>
</dbReference>
<dbReference type="HOGENOM" id="CLU_028760_1_2_4"/>
<dbReference type="OrthoDB" id="9800754at2"/>
<dbReference type="UniPathway" id="UPA00051">
    <property type="reaction ID" value="UER00075"/>
</dbReference>
<dbReference type="Proteomes" id="UP000001739">
    <property type="component" value="Chromosome 1"/>
</dbReference>
<dbReference type="GO" id="GO:0005737">
    <property type="term" value="C:cytoplasm"/>
    <property type="evidence" value="ECO:0007669"/>
    <property type="project" value="UniProtKB-SubCell"/>
</dbReference>
<dbReference type="GO" id="GO:0004414">
    <property type="term" value="F:homoserine O-acetyltransferase activity"/>
    <property type="evidence" value="ECO:0007669"/>
    <property type="project" value="TreeGrafter"/>
</dbReference>
<dbReference type="GO" id="GO:0008899">
    <property type="term" value="F:homoserine O-succinyltransferase activity"/>
    <property type="evidence" value="ECO:0007669"/>
    <property type="project" value="UniProtKB-UniRule"/>
</dbReference>
<dbReference type="GO" id="GO:0009092">
    <property type="term" value="P:homoserine metabolic process"/>
    <property type="evidence" value="ECO:0007669"/>
    <property type="project" value="TreeGrafter"/>
</dbReference>
<dbReference type="GO" id="GO:0009086">
    <property type="term" value="P:methionine biosynthetic process"/>
    <property type="evidence" value="ECO:0007669"/>
    <property type="project" value="UniProtKB-UniRule"/>
</dbReference>
<dbReference type="FunFam" id="1.10.1740.110:FF:000001">
    <property type="entry name" value="Homoserine O-acetyltransferase"/>
    <property type="match status" value="1"/>
</dbReference>
<dbReference type="Gene3D" id="1.10.1740.110">
    <property type="match status" value="1"/>
</dbReference>
<dbReference type="Gene3D" id="3.40.50.1820">
    <property type="entry name" value="alpha/beta hydrolase"/>
    <property type="match status" value="1"/>
</dbReference>
<dbReference type="HAMAP" id="MF_00296">
    <property type="entry name" value="MetX_acyltransf"/>
    <property type="match status" value="1"/>
</dbReference>
<dbReference type="InterPro" id="IPR000073">
    <property type="entry name" value="AB_hydrolase_1"/>
</dbReference>
<dbReference type="InterPro" id="IPR029058">
    <property type="entry name" value="AB_hydrolase_fold"/>
</dbReference>
<dbReference type="InterPro" id="IPR008220">
    <property type="entry name" value="HAT_MetX-like"/>
</dbReference>
<dbReference type="NCBIfam" id="TIGR01392">
    <property type="entry name" value="homoserO_Ac_trn"/>
    <property type="match status" value="1"/>
</dbReference>
<dbReference type="NCBIfam" id="NF001209">
    <property type="entry name" value="PRK00175.1"/>
    <property type="match status" value="1"/>
</dbReference>
<dbReference type="PANTHER" id="PTHR32268">
    <property type="entry name" value="HOMOSERINE O-ACETYLTRANSFERASE"/>
    <property type="match status" value="1"/>
</dbReference>
<dbReference type="PANTHER" id="PTHR32268:SF11">
    <property type="entry name" value="HOMOSERINE O-ACETYLTRANSFERASE"/>
    <property type="match status" value="1"/>
</dbReference>
<dbReference type="Pfam" id="PF00561">
    <property type="entry name" value="Abhydrolase_1"/>
    <property type="match status" value="1"/>
</dbReference>
<dbReference type="PIRSF" id="PIRSF000443">
    <property type="entry name" value="Homoser_Ac_trans"/>
    <property type="match status" value="1"/>
</dbReference>
<dbReference type="SUPFAM" id="SSF53474">
    <property type="entry name" value="alpha/beta-Hydrolases"/>
    <property type="match status" value="1"/>
</dbReference>
<accession>B2T1N1</accession>
<keyword id="KW-0012">Acyltransferase</keyword>
<keyword id="KW-0028">Amino-acid biosynthesis</keyword>
<keyword id="KW-0963">Cytoplasm</keyword>
<keyword id="KW-0486">Methionine biosynthesis</keyword>
<keyword id="KW-0808">Transferase</keyword>
<sequence length="381" mass="42005">MESIGIVAPHKMHFTEPLQLQNGSSLAGYDLMVETYGTLNAARSNAVLVCHALNASHHVAGVYADNPKDIGWWDNMVGPGKPLDTDKFFVIGVNNLGSCFGSTGPMSIDPATGNPYGAAFPVVTVEDWVNAQARVADQFGITRFAAVMGGSLGGMQALAWSMMYPERVGHCIVVASTPKLSAQNIAFNEVARSAILSDPDFHGGNYYAHNVKPKRGLRVARMIGHITYLSDDDMAEKFGRSLRRAEGAVDAYNFNFDVEFEVESYLRYQGDKFADYFDANTYLLITRALDYFDPAKAFDGDLTAAVAHTTAKYLIASFSTDWRFAPARSRELVKALLDHKRTVTYAEIDAPHGHDAFLLDDARYHNLMRAYYERIANEVNA</sequence>
<gene>
    <name evidence="1" type="primary">metXS</name>
    <name type="ordered locus">Bphyt_0335</name>
</gene>
<reference key="1">
    <citation type="journal article" date="2011" name="J. Bacteriol.">
        <title>Complete genome sequence of the plant growth-promoting endophyte Burkholderia phytofirmans strain PsJN.</title>
        <authorList>
            <person name="Weilharter A."/>
            <person name="Mitter B."/>
            <person name="Shin M.V."/>
            <person name="Chain P.S."/>
            <person name="Nowak J."/>
            <person name="Sessitsch A."/>
        </authorList>
    </citation>
    <scope>NUCLEOTIDE SEQUENCE [LARGE SCALE GENOMIC DNA]</scope>
    <source>
        <strain>DSM 17436 / LMG 22146 / PsJN</strain>
    </source>
</reference>
<evidence type="ECO:0000255" key="1">
    <source>
        <dbReference type="HAMAP-Rule" id="MF_00296"/>
    </source>
</evidence>
<name>METXS_PARPJ</name>
<comment type="function">
    <text evidence="1">Transfers a succinyl group from succinyl-CoA to L-homoserine, forming succinyl-L-homoserine.</text>
</comment>
<comment type="catalytic activity">
    <reaction evidence="1">
        <text>L-homoserine + succinyl-CoA = O-succinyl-L-homoserine + CoA</text>
        <dbReference type="Rhea" id="RHEA:22008"/>
        <dbReference type="ChEBI" id="CHEBI:57287"/>
        <dbReference type="ChEBI" id="CHEBI:57292"/>
        <dbReference type="ChEBI" id="CHEBI:57476"/>
        <dbReference type="ChEBI" id="CHEBI:57661"/>
        <dbReference type="EC" id="2.3.1.46"/>
    </reaction>
</comment>
<comment type="pathway">
    <text evidence="1">Amino-acid biosynthesis; L-methionine biosynthesis via de novo pathway; O-succinyl-L-homoserine from L-homoserine: step 1/1.</text>
</comment>
<comment type="subunit">
    <text evidence="1">Homodimer.</text>
</comment>
<comment type="subcellular location">
    <subcellularLocation>
        <location evidence="1">Cytoplasm</location>
    </subcellularLocation>
</comment>
<comment type="similarity">
    <text evidence="1">Belongs to the AB hydrolase superfamily. MetX family.</text>
</comment>
<organism>
    <name type="scientific">Paraburkholderia phytofirmans (strain DSM 17436 / LMG 22146 / PsJN)</name>
    <name type="common">Burkholderia phytofirmans</name>
    <dbReference type="NCBI Taxonomy" id="398527"/>
    <lineage>
        <taxon>Bacteria</taxon>
        <taxon>Pseudomonadati</taxon>
        <taxon>Pseudomonadota</taxon>
        <taxon>Betaproteobacteria</taxon>
        <taxon>Burkholderiales</taxon>
        <taxon>Burkholderiaceae</taxon>
        <taxon>Paraburkholderia</taxon>
    </lineage>
</organism>
<feature type="chain" id="PRO_1000115217" description="Homoserine O-succinyltransferase">
    <location>
        <begin position="1"/>
        <end position="381"/>
    </location>
</feature>
<feature type="domain" description="AB hydrolase-1" evidence="1">
    <location>
        <begin position="45"/>
        <end position="360"/>
    </location>
</feature>
<feature type="active site" description="Nucleophile" evidence="1">
    <location>
        <position position="151"/>
    </location>
</feature>
<feature type="active site" evidence="1">
    <location>
        <position position="321"/>
    </location>
</feature>
<feature type="active site" evidence="1">
    <location>
        <position position="354"/>
    </location>
</feature>
<feature type="binding site" evidence="1">
    <location>
        <position position="221"/>
    </location>
    <ligand>
        <name>substrate</name>
    </ligand>
</feature>
<feature type="binding site" evidence="1">
    <location>
        <position position="355"/>
    </location>
    <ligand>
        <name>substrate</name>
    </ligand>
</feature>
<feature type="site" description="Important for acyl-CoA specificity" evidence="1">
    <location>
        <position position="323"/>
    </location>
</feature>